<accession>Q9SZK1</accession>
<feature type="chain" id="PRO_0000363472" description="Pentatricopeptide repeat-containing protein At4g38010">
    <location>
        <begin position="1"/>
        <end position="559"/>
    </location>
</feature>
<feature type="repeat" description="PPR 1">
    <location>
        <begin position="70"/>
        <end position="104"/>
    </location>
</feature>
<feature type="repeat" description="PPR 2">
    <location>
        <begin position="105"/>
        <end position="139"/>
    </location>
</feature>
<feature type="repeat" description="PPR 3">
    <location>
        <begin position="140"/>
        <end position="170"/>
    </location>
</feature>
<feature type="repeat" description="PPR 4">
    <location>
        <begin position="171"/>
        <end position="201"/>
    </location>
</feature>
<feature type="repeat" description="PPR 5">
    <location>
        <begin position="203"/>
        <end position="233"/>
    </location>
</feature>
<feature type="repeat" description="PPR 6">
    <location>
        <begin position="238"/>
        <end position="268"/>
    </location>
</feature>
<feature type="repeat" description="PPR 7">
    <location>
        <begin position="269"/>
        <end position="304"/>
    </location>
</feature>
<feature type="repeat" description="PPR 8">
    <location>
        <begin position="305"/>
        <end position="339"/>
    </location>
</feature>
<feature type="repeat" description="PPR 9">
    <location>
        <begin position="340"/>
        <end position="370"/>
    </location>
</feature>
<feature type="repeat" description="PPR 10">
    <location>
        <begin position="371"/>
        <end position="405"/>
    </location>
</feature>
<feature type="repeat" description="PPR 11">
    <location>
        <begin position="406"/>
        <end position="440"/>
    </location>
</feature>
<feature type="repeat" description="PPR 12">
    <location>
        <begin position="443"/>
        <end position="473"/>
    </location>
</feature>
<feature type="region of interest" description="Type E motif">
    <location>
        <begin position="478"/>
        <end position="554"/>
    </location>
</feature>
<proteinExistence type="inferred from homology"/>
<comment type="similarity">
    <text evidence="1">Belongs to the PPR family. PCMP-E subfamily.</text>
</comment>
<comment type="online information" name="Pentatricopeptide repeat proteins">
    <link uri="https://ppr.plantenergy.uwa.edu.au"/>
</comment>
<sequence length="559" mass="62434">MYLPEKSVLLELISRCSSLRVFKQIQTQLITRDLLRDDLIINKVVTFLGKSADFASYSSVILHSIRSVLSSFSYNTLLSSYAVCDKPRVTIFAYKTFVSNGFSPDMFTFPPVFKACGKFSGIREGKQIHGIVTKMGFYDDIYVQNSLVHFYGVCGESRNACKVFGEMPVRDVVSWTGIITGFTRTGLYKEALDTFSKMDVEPNLATYVCVLVSSGRVGCLSLGKGIHGLILKRASLISLETGNALIDMYVKCEQLSDAMRVFGELEKKDKVSWNSMISGLVHCERSKEAIDLFSLMQTSSGIKPDGHILTSVLSACASLGAVDHGRWVHEYILTAGIKWDTHIGTAIVDMYAKCGYIETALEIFNGIRSKNVFTWNALLGGLAIHGHGLESLRYFEEMVKLGFKPNLVTFLAALNACCHTGLVDEGRRYFHKMKSREYNLFPKLEHYGCMIDLLCRAGLLDEALELVKAMPVKPDVRICGAILSACKNRGTLMELPKEILDSFLDIEFEDSGVYVLLSNIFAANRRWDDVARIRRLMKVKGISKVPGSSYIEKFMTLDQ</sequence>
<keyword id="KW-1185">Reference proteome</keyword>
<keyword id="KW-0677">Repeat</keyword>
<protein>
    <recommendedName>
        <fullName>Pentatricopeptide repeat-containing protein At4g38010</fullName>
    </recommendedName>
</protein>
<reference key="1">
    <citation type="journal article" date="1999" name="Nature">
        <title>Sequence and analysis of chromosome 4 of the plant Arabidopsis thaliana.</title>
        <authorList>
            <person name="Mayer K.F.X."/>
            <person name="Schueller C."/>
            <person name="Wambutt R."/>
            <person name="Murphy G."/>
            <person name="Volckaert G."/>
            <person name="Pohl T."/>
            <person name="Duesterhoeft A."/>
            <person name="Stiekema W."/>
            <person name="Entian K.-D."/>
            <person name="Terryn N."/>
            <person name="Harris B."/>
            <person name="Ansorge W."/>
            <person name="Brandt P."/>
            <person name="Grivell L.A."/>
            <person name="Rieger M."/>
            <person name="Weichselgartner M."/>
            <person name="de Simone V."/>
            <person name="Obermaier B."/>
            <person name="Mache R."/>
            <person name="Mueller M."/>
            <person name="Kreis M."/>
            <person name="Delseny M."/>
            <person name="Puigdomenech P."/>
            <person name="Watson M."/>
            <person name="Schmidtheini T."/>
            <person name="Reichert B."/>
            <person name="Portetelle D."/>
            <person name="Perez-Alonso M."/>
            <person name="Boutry M."/>
            <person name="Bancroft I."/>
            <person name="Vos P."/>
            <person name="Hoheisel J."/>
            <person name="Zimmermann W."/>
            <person name="Wedler H."/>
            <person name="Ridley P."/>
            <person name="Langham S.-A."/>
            <person name="McCullagh B."/>
            <person name="Bilham L."/>
            <person name="Robben J."/>
            <person name="van der Schueren J."/>
            <person name="Grymonprez B."/>
            <person name="Chuang Y.-J."/>
            <person name="Vandenbussche F."/>
            <person name="Braeken M."/>
            <person name="Weltjens I."/>
            <person name="Voet M."/>
            <person name="Bastiaens I."/>
            <person name="Aert R."/>
            <person name="Defoor E."/>
            <person name="Weitzenegger T."/>
            <person name="Bothe G."/>
            <person name="Ramsperger U."/>
            <person name="Hilbert H."/>
            <person name="Braun M."/>
            <person name="Holzer E."/>
            <person name="Brandt A."/>
            <person name="Peters S."/>
            <person name="van Staveren M."/>
            <person name="Dirkse W."/>
            <person name="Mooijman P."/>
            <person name="Klein Lankhorst R."/>
            <person name="Rose M."/>
            <person name="Hauf J."/>
            <person name="Koetter P."/>
            <person name="Berneiser S."/>
            <person name="Hempel S."/>
            <person name="Feldpausch M."/>
            <person name="Lamberth S."/>
            <person name="Van den Daele H."/>
            <person name="De Keyser A."/>
            <person name="Buysshaert C."/>
            <person name="Gielen J."/>
            <person name="Villarroel R."/>
            <person name="De Clercq R."/>
            <person name="van Montagu M."/>
            <person name="Rogers J."/>
            <person name="Cronin A."/>
            <person name="Quail M.A."/>
            <person name="Bray-Allen S."/>
            <person name="Clark L."/>
            <person name="Doggett J."/>
            <person name="Hall S."/>
            <person name="Kay M."/>
            <person name="Lennard N."/>
            <person name="McLay K."/>
            <person name="Mayes R."/>
            <person name="Pettett A."/>
            <person name="Rajandream M.A."/>
            <person name="Lyne M."/>
            <person name="Benes V."/>
            <person name="Rechmann S."/>
            <person name="Borkova D."/>
            <person name="Bloecker H."/>
            <person name="Scharfe M."/>
            <person name="Grimm M."/>
            <person name="Loehnert T.-H."/>
            <person name="Dose S."/>
            <person name="de Haan M."/>
            <person name="Maarse A.C."/>
            <person name="Schaefer M."/>
            <person name="Mueller-Auer S."/>
            <person name="Gabel C."/>
            <person name="Fuchs M."/>
            <person name="Fartmann B."/>
            <person name="Granderath K."/>
            <person name="Dauner D."/>
            <person name="Herzl A."/>
            <person name="Neumann S."/>
            <person name="Argiriou A."/>
            <person name="Vitale D."/>
            <person name="Liguori R."/>
            <person name="Piravandi E."/>
            <person name="Massenet O."/>
            <person name="Quigley F."/>
            <person name="Clabauld G."/>
            <person name="Muendlein A."/>
            <person name="Felber R."/>
            <person name="Schnabl S."/>
            <person name="Hiller R."/>
            <person name="Schmidt W."/>
            <person name="Lecharny A."/>
            <person name="Aubourg S."/>
            <person name="Chefdor F."/>
            <person name="Cooke R."/>
            <person name="Berger C."/>
            <person name="Monfort A."/>
            <person name="Casacuberta E."/>
            <person name="Gibbons T."/>
            <person name="Weber N."/>
            <person name="Vandenbol M."/>
            <person name="Bargues M."/>
            <person name="Terol J."/>
            <person name="Torres A."/>
            <person name="Perez-Perez A."/>
            <person name="Purnelle B."/>
            <person name="Bent E."/>
            <person name="Johnson S."/>
            <person name="Tacon D."/>
            <person name="Jesse T."/>
            <person name="Heijnen L."/>
            <person name="Schwarz S."/>
            <person name="Scholler P."/>
            <person name="Heber S."/>
            <person name="Francs P."/>
            <person name="Bielke C."/>
            <person name="Frishman D."/>
            <person name="Haase D."/>
            <person name="Lemcke K."/>
            <person name="Mewes H.-W."/>
            <person name="Stocker S."/>
            <person name="Zaccaria P."/>
            <person name="Bevan M."/>
            <person name="Wilson R.K."/>
            <person name="de la Bastide M."/>
            <person name="Habermann K."/>
            <person name="Parnell L."/>
            <person name="Dedhia N."/>
            <person name="Gnoj L."/>
            <person name="Schutz K."/>
            <person name="Huang E."/>
            <person name="Spiegel L."/>
            <person name="Sekhon M."/>
            <person name="Murray J."/>
            <person name="Sheet P."/>
            <person name="Cordes M."/>
            <person name="Abu-Threideh J."/>
            <person name="Stoneking T."/>
            <person name="Kalicki J."/>
            <person name="Graves T."/>
            <person name="Harmon G."/>
            <person name="Edwards J."/>
            <person name="Latreille P."/>
            <person name="Courtney L."/>
            <person name="Cloud J."/>
            <person name="Abbott A."/>
            <person name="Scott K."/>
            <person name="Johnson D."/>
            <person name="Minx P."/>
            <person name="Bentley D."/>
            <person name="Fulton B."/>
            <person name="Miller N."/>
            <person name="Greco T."/>
            <person name="Kemp K."/>
            <person name="Kramer J."/>
            <person name="Fulton L."/>
            <person name="Mardis E."/>
            <person name="Dante M."/>
            <person name="Pepin K."/>
            <person name="Hillier L.W."/>
            <person name="Nelson J."/>
            <person name="Spieth J."/>
            <person name="Ryan E."/>
            <person name="Andrews S."/>
            <person name="Geisel C."/>
            <person name="Layman D."/>
            <person name="Du H."/>
            <person name="Ali J."/>
            <person name="Berghoff A."/>
            <person name="Jones K."/>
            <person name="Drone K."/>
            <person name="Cotton M."/>
            <person name="Joshu C."/>
            <person name="Antonoiu B."/>
            <person name="Zidanic M."/>
            <person name="Strong C."/>
            <person name="Sun H."/>
            <person name="Lamar B."/>
            <person name="Yordan C."/>
            <person name="Ma P."/>
            <person name="Zhong J."/>
            <person name="Preston R."/>
            <person name="Vil D."/>
            <person name="Shekher M."/>
            <person name="Matero A."/>
            <person name="Shah R."/>
            <person name="Swaby I.K."/>
            <person name="O'Shaughnessy A."/>
            <person name="Rodriguez M."/>
            <person name="Hoffman J."/>
            <person name="Till S."/>
            <person name="Granat S."/>
            <person name="Shohdy N."/>
            <person name="Hasegawa A."/>
            <person name="Hameed A."/>
            <person name="Lodhi M."/>
            <person name="Johnson A."/>
            <person name="Chen E."/>
            <person name="Marra M.A."/>
            <person name="Martienssen R."/>
            <person name="McCombie W.R."/>
        </authorList>
    </citation>
    <scope>NUCLEOTIDE SEQUENCE [LARGE SCALE GENOMIC DNA]</scope>
    <source>
        <strain>cv. Columbia</strain>
    </source>
</reference>
<reference key="2">
    <citation type="journal article" date="2017" name="Plant J.">
        <title>Araport11: a complete reannotation of the Arabidopsis thaliana reference genome.</title>
        <authorList>
            <person name="Cheng C.Y."/>
            <person name="Krishnakumar V."/>
            <person name="Chan A.P."/>
            <person name="Thibaud-Nissen F."/>
            <person name="Schobel S."/>
            <person name="Town C.D."/>
        </authorList>
    </citation>
    <scope>GENOME REANNOTATION</scope>
    <source>
        <strain>cv. Columbia</strain>
    </source>
</reference>
<reference key="3">
    <citation type="journal article" date="2000" name="Plant Mol. Biol.">
        <title>In Arabidopsis thaliana, 1% of the genome codes for a novel protein family unique to plants.</title>
        <authorList>
            <person name="Aubourg S."/>
            <person name="Boudet N."/>
            <person name="Kreis M."/>
            <person name="Lecharny A."/>
        </authorList>
    </citation>
    <scope>GENE FAMILY</scope>
</reference>
<reference key="4">
    <citation type="journal article" date="2004" name="Plant Cell">
        <title>Genome-wide analysis of Arabidopsis pentatricopeptide repeat proteins reveals their essential role in organelle biogenesis.</title>
        <authorList>
            <person name="Lurin C."/>
            <person name="Andres C."/>
            <person name="Aubourg S."/>
            <person name="Bellaoui M."/>
            <person name="Bitton F."/>
            <person name="Bruyere C."/>
            <person name="Caboche M."/>
            <person name="Debast C."/>
            <person name="Gualberto J."/>
            <person name="Hoffmann B."/>
            <person name="Lecharny A."/>
            <person name="Le Ret M."/>
            <person name="Martin-Magniette M.-L."/>
            <person name="Mireau H."/>
            <person name="Peeters N."/>
            <person name="Renou J.-P."/>
            <person name="Szurek B."/>
            <person name="Taconnat L."/>
            <person name="Small I."/>
        </authorList>
    </citation>
    <scope>GENE FAMILY</scope>
</reference>
<name>PP355_ARATH</name>
<gene>
    <name type="primary">PCMP-E45</name>
    <name type="ordered locus">At4g38010</name>
    <name type="ORF">F20D10.130</name>
</gene>
<evidence type="ECO:0000305" key="1"/>
<dbReference type="EMBL" id="AL035538">
    <property type="protein sequence ID" value="CAB37541.1"/>
    <property type="molecule type" value="Genomic_DNA"/>
</dbReference>
<dbReference type="EMBL" id="AL161592">
    <property type="protein sequence ID" value="CAB80466.1"/>
    <property type="molecule type" value="Genomic_DNA"/>
</dbReference>
<dbReference type="EMBL" id="CP002687">
    <property type="protein sequence ID" value="AEE86863.1"/>
    <property type="molecule type" value="Genomic_DNA"/>
</dbReference>
<dbReference type="PIR" id="T05628">
    <property type="entry name" value="T05628"/>
</dbReference>
<dbReference type="RefSeq" id="NP_195514.1">
    <property type="nucleotide sequence ID" value="NM_119962.2"/>
</dbReference>
<dbReference type="SMR" id="Q9SZK1"/>
<dbReference type="FunCoup" id="Q9SZK1">
    <property type="interactions" value="1"/>
</dbReference>
<dbReference type="STRING" id="3702.Q9SZK1"/>
<dbReference type="iPTMnet" id="Q9SZK1"/>
<dbReference type="PaxDb" id="3702-AT4G38010.1"/>
<dbReference type="ProteomicsDB" id="249248"/>
<dbReference type="EnsemblPlants" id="AT4G38010.1">
    <property type="protein sequence ID" value="AT4G38010.1"/>
    <property type="gene ID" value="AT4G38010"/>
</dbReference>
<dbReference type="GeneID" id="829957"/>
<dbReference type="Gramene" id="AT4G38010.1">
    <property type="protein sequence ID" value="AT4G38010.1"/>
    <property type="gene ID" value="AT4G38010"/>
</dbReference>
<dbReference type="KEGG" id="ath:AT4G38010"/>
<dbReference type="Araport" id="AT4G38010"/>
<dbReference type="TAIR" id="AT4G38010"/>
<dbReference type="eggNOG" id="KOG4197">
    <property type="taxonomic scope" value="Eukaryota"/>
</dbReference>
<dbReference type="HOGENOM" id="CLU_002706_0_1_1"/>
<dbReference type="InParanoid" id="Q9SZK1"/>
<dbReference type="OMA" id="MPMPPDV"/>
<dbReference type="PhylomeDB" id="Q9SZK1"/>
<dbReference type="PRO" id="PR:Q9SZK1"/>
<dbReference type="Proteomes" id="UP000006548">
    <property type="component" value="Chromosome 4"/>
</dbReference>
<dbReference type="ExpressionAtlas" id="Q9SZK1">
    <property type="expression patterns" value="baseline and differential"/>
</dbReference>
<dbReference type="GO" id="GO:0003723">
    <property type="term" value="F:RNA binding"/>
    <property type="evidence" value="ECO:0007669"/>
    <property type="project" value="InterPro"/>
</dbReference>
<dbReference type="GO" id="GO:0009451">
    <property type="term" value="P:RNA modification"/>
    <property type="evidence" value="ECO:0007669"/>
    <property type="project" value="InterPro"/>
</dbReference>
<dbReference type="FunFam" id="1.25.40.10:FF:000511">
    <property type="entry name" value="Pentatricopeptide repeat-containing protein"/>
    <property type="match status" value="1"/>
</dbReference>
<dbReference type="FunFam" id="1.25.40.10:FF:000417">
    <property type="entry name" value="Pentatricopeptide repeat-containing protein At4g38010"/>
    <property type="match status" value="1"/>
</dbReference>
<dbReference type="FunFam" id="1.25.40.10:FF:000968">
    <property type="entry name" value="Pentatricopeptide repeat-containing protein, mitochondrial"/>
    <property type="match status" value="1"/>
</dbReference>
<dbReference type="Gene3D" id="1.25.40.10">
    <property type="entry name" value="Tetratricopeptide repeat domain"/>
    <property type="match status" value="4"/>
</dbReference>
<dbReference type="InterPro" id="IPR046848">
    <property type="entry name" value="E_motif"/>
</dbReference>
<dbReference type="InterPro" id="IPR002885">
    <property type="entry name" value="Pentatricopeptide_rpt"/>
</dbReference>
<dbReference type="InterPro" id="IPR046960">
    <property type="entry name" value="PPR_At4g14850-like_plant"/>
</dbReference>
<dbReference type="InterPro" id="IPR011990">
    <property type="entry name" value="TPR-like_helical_dom_sf"/>
</dbReference>
<dbReference type="NCBIfam" id="TIGR00756">
    <property type="entry name" value="PPR"/>
    <property type="match status" value="4"/>
</dbReference>
<dbReference type="PANTHER" id="PTHR47926">
    <property type="entry name" value="PENTATRICOPEPTIDE REPEAT-CONTAINING PROTEIN"/>
    <property type="match status" value="1"/>
</dbReference>
<dbReference type="PANTHER" id="PTHR47926:SF459">
    <property type="entry name" value="PENTATRICOPEPTIDE REPEAT-CONTAINING PROTEIN"/>
    <property type="match status" value="1"/>
</dbReference>
<dbReference type="Pfam" id="PF20431">
    <property type="entry name" value="E_motif"/>
    <property type="match status" value="1"/>
</dbReference>
<dbReference type="Pfam" id="PF01535">
    <property type="entry name" value="PPR"/>
    <property type="match status" value="3"/>
</dbReference>
<dbReference type="Pfam" id="PF12854">
    <property type="entry name" value="PPR_1"/>
    <property type="match status" value="1"/>
</dbReference>
<dbReference type="Pfam" id="PF13041">
    <property type="entry name" value="PPR_2"/>
    <property type="match status" value="2"/>
</dbReference>
<dbReference type="PROSITE" id="PS51375">
    <property type="entry name" value="PPR"/>
    <property type="match status" value="12"/>
</dbReference>
<organism>
    <name type="scientific">Arabidopsis thaliana</name>
    <name type="common">Mouse-ear cress</name>
    <dbReference type="NCBI Taxonomy" id="3702"/>
    <lineage>
        <taxon>Eukaryota</taxon>
        <taxon>Viridiplantae</taxon>
        <taxon>Streptophyta</taxon>
        <taxon>Embryophyta</taxon>
        <taxon>Tracheophyta</taxon>
        <taxon>Spermatophyta</taxon>
        <taxon>Magnoliopsida</taxon>
        <taxon>eudicotyledons</taxon>
        <taxon>Gunneridae</taxon>
        <taxon>Pentapetalae</taxon>
        <taxon>rosids</taxon>
        <taxon>malvids</taxon>
        <taxon>Brassicales</taxon>
        <taxon>Brassicaceae</taxon>
        <taxon>Camelineae</taxon>
        <taxon>Arabidopsis</taxon>
    </lineage>
</organism>